<accession>P24931</accession>
<organism>
    <name type="scientific">Nitratidesulfovibrio vulgaris (strain ATCC 29579 / DSM 644 / CCUG 34227 / NCIMB 8303 / VKM B-1760 / Hildenborough)</name>
    <name type="common">Desulfovibrio vulgaris</name>
    <dbReference type="NCBI Taxonomy" id="882"/>
    <lineage>
        <taxon>Bacteria</taxon>
        <taxon>Pseudomonadati</taxon>
        <taxon>Thermodesulfobacteriota</taxon>
        <taxon>Desulfovibrionia</taxon>
        <taxon>Desulfovibrionales</taxon>
        <taxon>Desulfovibrionaceae</taxon>
        <taxon>Nitratidesulfovibrio</taxon>
    </lineage>
</organism>
<protein>
    <recommendedName>
        <fullName>Rubrerythrin</fullName>
        <shortName>Rr</shortName>
    </recommendedName>
</protein>
<reference key="1">
    <citation type="journal article" date="1991" name="Biochemistry">
        <title>Cloning and sequencing of the gene for rubrerythrin from Desulfovibrio vulgaris (Hildenborough).</title>
        <authorList>
            <person name="Prickril B.C."/>
            <person name="Kurtz D.M. Jr."/>
            <person name="LeGall J."/>
            <person name="Voordouw G."/>
        </authorList>
    </citation>
    <scope>NUCLEOTIDE SEQUENCE [GENOMIC DNA]</scope>
</reference>
<reference key="2">
    <citation type="submission" date="1997-01" db="EMBL/GenBank/DDBJ databases">
        <authorList>
            <person name="Lumppio H.L."/>
            <person name="Shenvi N.V."/>
            <person name="Garg R.P."/>
            <person name="Summers A.O."/>
            <person name="Kurtz D.M. Jr."/>
        </authorList>
    </citation>
    <scope>NUCLEOTIDE SEQUENCE [GENOMIC DNA]</scope>
</reference>
<reference key="3">
    <citation type="journal article" date="1991" name="J. Biol. Chem.">
        <title>The primary structure of rubrerythrin, a protein with inorganic pyrophosphatase activity from Desulfovibrio vulgaris. Comparison with hemerythrin and rubredoxin.</title>
        <authorList>
            <person name="van Beeumen J.J."/>
            <person name="van Driessche G."/>
            <person name="Liu M.-Y."/>
            <person name="LeGall J."/>
        </authorList>
    </citation>
    <scope>PROTEIN SEQUENCE</scope>
</reference>
<reference key="4">
    <citation type="journal article" date="2004" name="Nat. Biotechnol.">
        <title>The genome sequence of the anaerobic, sulfate-reducing bacterium Desulfovibrio vulgaris Hildenborough.</title>
        <authorList>
            <person name="Heidelberg J.F."/>
            <person name="Seshadri R."/>
            <person name="Haveman S.A."/>
            <person name="Hemme C.L."/>
            <person name="Paulsen I.T."/>
            <person name="Kolonay J.F."/>
            <person name="Eisen J.A."/>
            <person name="Ward N.L."/>
            <person name="Methe B.A."/>
            <person name="Brinkac L.M."/>
            <person name="Daugherty S.C."/>
            <person name="DeBoy R.T."/>
            <person name="Dodson R.J."/>
            <person name="Durkin A.S."/>
            <person name="Madupu R."/>
            <person name="Nelson W.C."/>
            <person name="Sullivan S.A."/>
            <person name="Fouts D.E."/>
            <person name="Haft D.H."/>
            <person name="Selengut J."/>
            <person name="Peterson J.D."/>
            <person name="Davidsen T.M."/>
            <person name="Zafar N."/>
            <person name="Zhou L."/>
            <person name="Radune D."/>
            <person name="Dimitrov G."/>
            <person name="Hance M."/>
            <person name="Tran K."/>
            <person name="Khouri H.M."/>
            <person name="Gill J."/>
            <person name="Utterback T.R."/>
            <person name="Feldblyum T.V."/>
            <person name="Wall J.D."/>
            <person name="Voordouw G."/>
            <person name="Fraser C.M."/>
        </authorList>
    </citation>
    <scope>NUCLEOTIDE SEQUENCE [LARGE SCALE GENOMIC DNA]</scope>
    <source>
        <strain>ATCC 29579 / DSM 644 / CCUG 34227 / NCIMB 8303 / VKM B-1760 / Hildenborough</strain>
    </source>
</reference>
<reference key="5">
    <citation type="journal article" date="1993" name="Eur. J. Biochem.">
        <title>Nigerythrin and rubrerythrin from Desulfovibrio vulgaris each contain two mononuclear iron centers and two dinuclear iron clusters.</title>
        <authorList>
            <person name="Pierik A.J."/>
            <person name="Wolbert R.B.G."/>
            <person name="Portier G.L."/>
            <person name="Verhagen M.F.J.M."/>
            <person name="Hagen W.R."/>
        </authorList>
    </citation>
    <scope>PROTEIN SEQUENCE OF 1-15</scope>
    <scope>CHARACTERIZATION OF IRON-BINDING SITES</scope>
</reference>
<reference key="6">
    <citation type="journal article" date="1991" name="Biochem. Biophys. Res. Commun.">
        <title>Intrapeptide sequence homology in rubrerythrin from Desulfovibrio vulgaris: identification of potential ligands to the diiron site.</title>
        <authorList>
            <person name="Kurtz D.M. Jr."/>
            <person name="Prickril B.C."/>
        </authorList>
    </citation>
    <scope>POSSIBLE BINUCLEAR IRON-SITES</scope>
</reference>
<reference key="7">
    <citation type="journal article" date="1988" name="Biochemistry">
        <title>Isolation and characterization of rubrerythrin, a non-heme iron protein from Desulfovibrio vulgaris that contains rubredoxin centers and a hemerythrin-like binuclear iron cluster.</title>
        <authorList>
            <person name="LeGall J."/>
            <person name="Prickril B.C."/>
            <person name="Moura I."/>
            <person name="Xavier A.V."/>
            <person name="Moura J.J.G."/>
            <person name="Huynh B.H."/>
        </authorList>
    </citation>
    <scope>CHARACTERIZATION</scope>
</reference>
<reference key="8">
    <citation type="journal article" date="1996" name="Nat. Struct. Biol.">
        <title>The structure of Desulfovibrio vulgaris rubrerythrin reveals a unique combination of rubredoxin-like FeS4 and ferritin-like diiron domains.</title>
        <authorList>
            <person name="deMare F."/>
            <person name="Kurtz D.M. Jr."/>
            <person name="Nordlund P."/>
        </authorList>
    </citation>
    <scope>X-RAY CRYSTALLOGRAPHY (2.1 ANGSTROMS)</scope>
</reference>
<reference key="9">
    <citation type="journal article" date="1999" name="Nat. Struct. Biol.">
        <title>Alternative metal-binding sites in rubrerythrin.</title>
        <authorList>
            <person name="Sieker L.C."/>
            <person name="Holmes M."/>
            <person name="Le Trong I."/>
            <person name="Turley S."/>
            <person name="Santarsiero B.D."/>
            <person name="Liu M.-Y."/>
            <person name="LeGall J."/>
            <person name="Stenkamp R.E."/>
        </authorList>
    </citation>
    <scope>X-RAY CRYSTALLOGRAPHY (1.9 ANGSTROMS)</scope>
</reference>
<reference key="10">
    <citation type="journal article" date="2000" name="J. Biol. Inorg. Chem.">
        <title>The 1.9 A crystal structure of the 'as isolated' rubrerythrin from Desulfovibrio vulgaris: some surprising results.</title>
        <authorList>
            <person name="Sieker L.C."/>
            <person name="Holmes M."/>
            <person name="Le Trong I."/>
            <person name="Turley S."/>
            <person name="Liu M.-Y."/>
            <person name="LeGall J."/>
            <person name="Stenkamp R.E."/>
        </authorList>
    </citation>
    <scope>X-RAY CRYSTALLOGRAPHY (1.9 ANGSTROMS)</scope>
</reference>
<reference evidence="6 7 8" key="11">
    <citation type="journal article" date="2002" name="J. Am. Chem. Soc.">
        <title>X-ray crystal structures of reduced rubrerythrin and its azide adduct: a structure-based mechanism for a non-heme diiron peroxidase.</title>
        <authorList>
            <person name="Jin S."/>
            <person name="Kurtz D.M. Jr."/>
            <person name="Liu Z.-J."/>
            <person name="Rose J."/>
            <person name="Wang B.-C."/>
        </authorList>
    </citation>
    <scope>X-RAY CRYSTALLOGRAPHY (1.63 ANGSTROMS) IN COMPLEX WITH IRON IONS</scope>
</reference>
<reference key="12">
    <citation type="journal article" date="2003" name="J. Biol. Inorg. Chem.">
        <title>Crystal structure studies on rubrerythrin: enzymatic activity in relation to the zinc movement.</title>
        <authorList>
            <person name="Li M."/>
            <person name="Liu M.-Y."/>
            <person name="LeGall J."/>
            <person name="Gui L.-L."/>
            <person name="Liao J."/>
            <person name="Jiang T."/>
            <person name="Zhang J.-P."/>
            <person name="Liang D.-C."/>
            <person name="Chang W.-R."/>
        </authorList>
    </citation>
    <scope>X-RAY CRYSTALLOGRAPHY (2.2 ANGSTROMS)</scope>
</reference>
<keyword id="KW-0002">3D-structure</keyword>
<keyword id="KW-0963">Cytoplasm</keyword>
<keyword id="KW-0903">Direct protein sequencing</keyword>
<keyword id="KW-0249">Electron transport</keyword>
<keyword id="KW-0408">Iron</keyword>
<keyword id="KW-0479">Metal-binding</keyword>
<keyword id="KW-1185">Reference proteome</keyword>
<keyword id="KW-0813">Transport</keyword>
<keyword id="KW-0862">Zinc</keyword>
<evidence type="ECO:0000250" key="1"/>
<evidence type="ECO:0000255" key="2">
    <source>
        <dbReference type="PROSITE-ProRule" id="PRU00085"/>
    </source>
</evidence>
<evidence type="ECO:0000255" key="3">
    <source>
        <dbReference type="PROSITE-ProRule" id="PRU00241"/>
    </source>
</evidence>
<evidence type="ECO:0000269" key="4">
    <source>
    </source>
</evidence>
<evidence type="ECO:0000305" key="5"/>
<evidence type="ECO:0007744" key="6">
    <source>
        <dbReference type="PDB" id="1LKM"/>
    </source>
</evidence>
<evidence type="ECO:0007744" key="7">
    <source>
        <dbReference type="PDB" id="1LKO"/>
    </source>
</evidence>
<evidence type="ECO:0007744" key="8">
    <source>
        <dbReference type="PDB" id="1LKP"/>
    </source>
</evidence>
<evidence type="ECO:0007829" key="9">
    <source>
        <dbReference type="PDB" id="1LKO"/>
    </source>
</evidence>
<evidence type="ECO:0007829" key="10">
    <source>
        <dbReference type="PDB" id="1RYT"/>
    </source>
</evidence>
<comment type="function">
    <text evidence="1">May provide oxidative stress protection via catalytic reduction of intracellular hydrogen peroxide.</text>
</comment>
<comment type="cofactor">
    <cofactor>
        <name>Fe(3+)</name>
        <dbReference type="ChEBI" id="CHEBI:29034"/>
    </cofactor>
    <text>Binds 3 Fe(3+) ions per subunit.</text>
</comment>
<comment type="subunit">
    <text>Homodimer. Possesses two rubredoxin-like centers and two non-sulfur oxo-bridged di-iron centers per dimer.</text>
</comment>
<comment type="subcellular location">
    <subcellularLocation>
        <location evidence="5">Cytoplasm</location>
    </subcellularLocation>
</comment>
<comment type="caution">
    <text evidence="5">Was originally thought to have inorganic pyrophosphatase activity.</text>
</comment>
<gene>
    <name type="primary">rbr</name>
    <name type="ordered locus">DVU_3094</name>
</gene>
<feature type="chain" id="PRO_0000135064" description="Rubrerythrin">
    <location>
        <begin position="1"/>
        <end position="191"/>
    </location>
</feature>
<feature type="domain" description="Ferritin-like diiron" evidence="2">
    <location>
        <begin position="1"/>
        <end position="146"/>
    </location>
</feature>
<feature type="domain" description="Rubredoxin-like" evidence="3">
    <location>
        <begin position="153"/>
        <end position="191"/>
    </location>
</feature>
<feature type="binding site" evidence="4 6">
    <location>
        <position position="20"/>
    </location>
    <ligand>
        <name>Fe(3+)</name>
        <dbReference type="ChEBI" id="CHEBI:29034"/>
        <label>1</label>
    </ligand>
</feature>
<feature type="binding site" evidence="4 6">
    <location>
        <position position="53"/>
    </location>
    <ligand>
        <name>Fe(3+)</name>
        <dbReference type="ChEBI" id="CHEBI:29034"/>
        <label>1</label>
    </ligand>
</feature>
<feature type="binding site" evidence="4 6">
    <location>
        <position position="53"/>
    </location>
    <ligand>
        <name>Fe(3+)</name>
        <dbReference type="ChEBI" id="CHEBI:29034"/>
        <label>2</label>
    </ligand>
</feature>
<feature type="binding site" evidence="4 6">
    <location>
        <position position="94"/>
    </location>
    <ligand>
        <name>Fe(3+)</name>
        <dbReference type="ChEBI" id="CHEBI:29034"/>
        <label>2</label>
    </ligand>
</feature>
<feature type="binding site" evidence="4 6">
    <location>
        <position position="97"/>
    </location>
    <ligand>
        <name>Fe(3+)</name>
        <dbReference type="ChEBI" id="CHEBI:29034"/>
        <label>1</label>
    </ligand>
</feature>
<feature type="binding site" evidence="4 6">
    <location>
        <position position="128"/>
    </location>
    <ligand>
        <name>Fe(3+)</name>
        <dbReference type="ChEBI" id="CHEBI:29034"/>
        <label>1</label>
    </ligand>
</feature>
<feature type="binding site" evidence="4 6">
    <location>
        <position position="128"/>
    </location>
    <ligand>
        <name>Fe(3+)</name>
        <dbReference type="ChEBI" id="CHEBI:29034"/>
        <label>2</label>
    </ligand>
</feature>
<feature type="binding site" evidence="4 6">
    <location>
        <position position="131"/>
    </location>
    <ligand>
        <name>Fe(3+)</name>
        <dbReference type="ChEBI" id="CHEBI:29034"/>
        <label>2</label>
    </ligand>
</feature>
<feature type="binding site" evidence="4 6">
    <location>
        <position position="158"/>
    </location>
    <ligand>
        <name>Fe(3+)</name>
        <dbReference type="ChEBI" id="CHEBI:29034"/>
        <label>3</label>
    </ligand>
</feature>
<feature type="binding site" evidence="4 6">
    <location>
        <position position="161"/>
    </location>
    <ligand>
        <name>Fe(3+)</name>
        <dbReference type="ChEBI" id="CHEBI:29034"/>
        <label>3</label>
    </ligand>
</feature>
<feature type="binding site" evidence="4 6">
    <location>
        <position position="174"/>
    </location>
    <ligand>
        <name>Fe(3+)</name>
        <dbReference type="ChEBI" id="CHEBI:29034"/>
        <label>3</label>
    </ligand>
</feature>
<feature type="binding site" evidence="4 6">
    <location>
        <position position="177"/>
    </location>
    <ligand>
        <name>Fe(3+)</name>
        <dbReference type="ChEBI" id="CHEBI:29034"/>
        <label>3</label>
    </ligand>
</feature>
<feature type="strand" evidence="10">
    <location>
        <begin position="5"/>
        <end position="7"/>
    </location>
</feature>
<feature type="helix" evidence="9">
    <location>
        <begin position="8"/>
        <end position="36"/>
    </location>
</feature>
<feature type="helix" evidence="9">
    <location>
        <begin position="40"/>
        <end position="63"/>
    </location>
</feature>
<feature type="helix" evidence="9">
    <location>
        <begin position="83"/>
        <end position="99"/>
    </location>
</feature>
<feature type="helix" evidence="9">
    <location>
        <begin position="101"/>
        <end position="112"/>
    </location>
</feature>
<feature type="helix" evidence="9">
    <location>
        <begin position="115"/>
        <end position="143"/>
    </location>
</feature>
<feature type="strand" evidence="9">
    <location>
        <begin position="147"/>
        <end position="158"/>
    </location>
</feature>
<feature type="turn" evidence="9">
    <location>
        <begin position="159"/>
        <end position="161"/>
    </location>
</feature>
<feature type="strand" evidence="9">
    <location>
        <begin position="164"/>
        <end position="169"/>
    </location>
</feature>
<feature type="turn" evidence="9">
    <location>
        <begin position="175"/>
        <end position="177"/>
    </location>
</feature>
<feature type="helix" evidence="9">
    <location>
        <begin position="181"/>
        <end position="183"/>
    </location>
</feature>
<feature type="strand" evidence="9">
    <location>
        <begin position="184"/>
        <end position="186"/>
    </location>
</feature>
<dbReference type="EMBL" id="U82323">
    <property type="protein sequence ID" value="AAB39991.1"/>
    <property type="molecule type" value="Genomic_DNA"/>
</dbReference>
<dbReference type="EMBL" id="AE017285">
    <property type="protein sequence ID" value="AAS97565.1"/>
    <property type="molecule type" value="Genomic_DNA"/>
</dbReference>
<dbReference type="PIR" id="A41191">
    <property type="entry name" value="A39492"/>
</dbReference>
<dbReference type="RefSeq" id="WP_010940353.1">
    <property type="nucleotide sequence ID" value="NC_002937.3"/>
</dbReference>
<dbReference type="RefSeq" id="YP_012305.1">
    <property type="nucleotide sequence ID" value="NC_002937.3"/>
</dbReference>
<dbReference type="PDB" id="1B71">
    <property type="method" value="X-ray"/>
    <property type="resolution" value="1.90 A"/>
    <property type="chains" value="A=1-191"/>
</dbReference>
<dbReference type="PDB" id="1DVB">
    <property type="method" value="X-ray"/>
    <property type="resolution" value="1.90 A"/>
    <property type="chains" value="A=1-191"/>
</dbReference>
<dbReference type="PDB" id="1JYB">
    <property type="method" value="X-ray"/>
    <property type="resolution" value="2.20 A"/>
    <property type="chains" value="A=1-191"/>
</dbReference>
<dbReference type="PDB" id="1LKM">
    <property type="method" value="X-ray"/>
    <property type="resolution" value="1.69 A"/>
    <property type="chains" value="A=1-191"/>
</dbReference>
<dbReference type="PDB" id="1LKO">
    <property type="method" value="X-ray"/>
    <property type="resolution" value="1.63 A"/>
    <property type="chains" value="A=1-191"/>
</dbReference>
<dbReference type="PDB" id="1LKP">
    <property type="method" value="X-ray"/>
    <property type="resolution" value="1.64 A"/>
    <property type="chains" value="A=1-191"/>
</dbReference>
<dbReference type="PDB" id="1QYB">
    <property type="method" value="X-ray"/>
    <property type="resolution" value="1.75 A"/>
    <property type="chains" value="A=1-191"/>
</dbReference>
<dbReference type="PDB" id="1RYT">
    <property type="method" value="X-ray"/>
    <property type="resolution" value="2.10 A"/>
    <property type="chains" value="A=2-191"/>
</dbReference>
<dbReference type="PDB" id="1S2Z">
    <property type="method" value="X-ray"/>
    <property type="resolution" value="1.75 A"/>
    <property type="chains" value="A=1-191"/>
</dbReference>
<dbReference type="PDB" id="1S30">
    <property type="method" value="X-ray"/>
    <property type="resolution" value="2.05 A"/>
    <property type="chains" value="A=1-191"/>
</dbReference>
<dbReference type="PDBsum" id="1B71"/>
<dbReference type="PDBsum" id="1DVB"/>
<dbReference type="PDBsum" id="1JYB"/>
<dbReference type="PDBsum" id="1LKM"/>
<dbReference type="PDBsum" id="1LKO"/>
<dbReference type="PDBsum" id="1LKP"/>
<dbReference type="PDBsum" id="1QYB"/>
<dbReference type="PDBsum" id="1RYT"/>
<dbReference type="PDBsum" id="1S2Z"/>
<dbReference type="PDBsum" id="1S30"/>
<dbReference type="SMR" id="P24931"/>
<dbReference type="STRING" id="882.DVU_3094"/>
<dbReference type="PaxDb" id="882-DVU_3094"/>
<dbReference type="EnsemblBacteria" id="AAS97565">
    <property type="protein sequence ID" value="AAS97565"/>
    <property type="gene ID" value="DVU_3094"/>
</dbReference>
<dbReference type="KEGG" id="dvu:DVU_3094"/>
<dbReference type="PATRIC" id="fig|882.5.peg.2807"/>
<dbReference type="eggNOG" id="COG1592">
    <property type="taxonomic scope" value="Bacteria"/>
</dbReference>
<dbReference type="HOGENOM" id="CLU_095256_0_1_7"/>
<dbReference type="OrthoDB" id="9799749at2"/>
<dbReference type="PhylomeDB" id="P24931"/>
<dbReference type="EvolutionaryTrace" id="P24931"/>
<dbReference type="Proteomes" id="UP000002194">
    <property type="component" value="Chromosome"/>
</dbReference>
<dbReference type="GO" id="GO:0005737">
    <property type="term" value="C:cytoplasm"/>
    <property type="evidence" value="ECO:0007669"/>
    <property type="project" value="UniProtKB-SubCell"/>
</dbReference>
<dbReference type="GO" id="GO:0005506">
    <property type="term" value="F:iron ion binding"/>
    <property type="evidence" value="ECO:0000314"/>
    <property type="project" value="UniProtKB"/>
</dbReference>
<dbReference type="GO" id="GO:0016491">
    <property type="term" value="F:oxidoreductase activity"/>
    <property type="evidence" value="ECO:0007669"/>
    <property type="project" value="InterPro"/>
</dbReference>
<dbReference type="CDD" id="cd00729">
    <property type="entry name" value="rubredoxin_SM"/>
    <property type="match status" value="1"/>
</dbReference>
<dbReference type="CDD" id="cd01041">
    <property type="entry name" value="Rubrerythrin"/>
    <property type="match status" value="1"/>
</dbReference>
<dbReference type="FunFam" id="1.20.1260.10:FF:000023">
    <property type="entry name" value="Rubrerythrin"/>
    <property type="match status" value="1"/>
</dbReference>
<dbReference type="FunFam" id="2.20.28.10:FF:000018">
    <property type="entry name" value="Rubrerythrin"/>
    <property type="match status" value="1"/>
</dbReference>
<dbReference type="Gene3D" id="1.20.1260.10">
    <property type="match status" value="1"/>
</dbReference>
<dbReference type="Gene3D" id="2.20.28.10">
    <property type="match status" value="1"/>
</dbReference>
<dbReference type="InterPro" id="IPR012347">
    <property type="entry name" value="Ferritin-like"/>
</dbReference>
<dbReference type="InterPro" id="IPR009040">
    <property type="entry name" value="Ferritin-like_diiron"/>
</dbReference>
<dbReference type="InterPro" id="IPR009078">
    <property type="entry name" value="Ferritin-like_SF"/>
</dbReference>
<dbReference type="InterPro" id="IPR003251">
    <property type="entry name" value="Rr_diiron-bd_dom"/>
</dbReference>
<dbReference type="InterPro" id="IPR024934">
    <property type="entry name" value="Rubredoxin-like_dom"/>
</dbReference>
<dbReference type="InterPro" id="IPR052364">
    <property type="entry name" value="Rubrerythrin"/>
</dbReference>
<dbReference type="InterPro" id="IPR048574">
    <property type="entry name" value="RUBY_RBDX"/>
</dbReference>
<dbReference type="NCBIfam" id="NF045767">
    <property type="entry name" value="RuberyRbr"/>
    <property type="match status" value="1"/>
</dbReference>
<dbReference type="PANTHER" id="PTHR43865">
    <property type="entry name" value="RUBRERYTHRIN-RELATED"/>
    <property type="match status" value="1"/>
</dbReference>
<dbReference type="PANTHER" id="PTHR43865:SF1">
    <property type="entry name" value="RUBRERYTHRIN-RELATED"/>
    <property type="match status" value="1"/>
</dbReference>
<dbReference type="Pfam" id="PF02915">
    <property type="entry name" value="Rubrerythrin"/>
    <property type="match status" value="1"/>
</dbReference>
<dbReference type="Pfam" id="PF21349">
    <property type="entry name" value="RUBY_RBDX"/>
    <property type="match status" value="1"/>
</dbReference>
<dbReference type="SUPFAM" id="SSF47240">
    <property type="entry name" value="Ferritin-like"/>
    <property type="match status" value="1"/>
</dbReference>
<dbReference type="SUPFAM" id="SSF57802">
    <property type="entry name" value="Rubredoxin-like"/>
    <property type="match status" value="1"/>
</dbReference>
<dbReference type="PROSITE" id="PS50905">
    <property type="entry name" value="FERRITIN_LIKE"/>
    <property type="match status" value="1"/>
</dbReference>
<dbReference type="PROSITE" id="PS50903">
    <property type="entry name" value="RUBREDOXIN_LIKE"/>
    <property type="match status" value="1"/>
</dbReference>
<proteinExistence type="evidence at protein level"/>
<sequence length="191" mass="21544">MKSLKGSRTEKNILTAFAGESQARNRYNYFGGQAKKDGFVQISDIFAETADQEREHAKRLFKFLEGGDLEIVAAFPAGIIADTHANLIASAAGEHHEYTEMYPSFARIAREEGYEEIARVFASIAVAEEFHEKRFLDFARNIKEGRVFLREQATKWRCRNCGYVHEGTGAPELCPACAHPKAHFELLGINW</sequence>
<name>RUBY_NITV2</name>